<feature type="chain" id="PRO_0000172761" description="Uronate isomerase">
    <location>
        <begin position="1"/>
        <end position="473"/>
    </location>
</feature>
<proteinExistence type="inferred from homology"/>
<comment type="catalytic activity">
    <reaction>
        <text>D-glucuronate = D-fructuronate</text>
        <dbReference type="Rhea" id="RHEA:13049"/>
        <dbReference type="ChEBI" id="CHEBI:58720"/>
        <dbReference type="ChEBI" id="CHEBI:59863"/>
        <dbReference type="EC" id="5.3.1.12"/>
    </reaction>
</comment>
<comment type="catalytic activity">
    <reaction>
        <text>aldehydo-D-galacturonate = keto-D-tagaturonate</text>
        <dbReference type="Rhea" id="RHEA:27702"/>
        <dbReference type="ChEBI" id="CHEBI:12952"/>
        <dbReference type="ChEBI" id="CHEBI:17886"/>
        <dbReference type="EC" id="5.3.1.12"/>
    </reaction>
</comment>
<comment type="pathway">
    <text>Carbohydrate metabolism; pentose and glucuronate interconversion.</text>
</comment>
<comment type="similarity">
    <text evidence="1">Belongs to the metallo-dependent hydrolases superfamily. Uronate isomerase family.</text>
</comment>
<keyword id="KW-0413">Isomerase</keyword>
<evidence type="ECO:0000305" key="1"/>
<protein>
    <recommendedName>
        <fullName>Uronate isomerase</fullName>
        <ecNumber>5.3.1.12</ecNumber>
    </recommendedName>
    <alternativeName>
        <fullName>Glucuronate isomerase</fullName>
    </alternativeName>
    <alternativeName>
        <fullName>Uronic isomerase</fullName>
    </alternativeName>
</protein>
<name>UXAC_GEOSE</name>
<organism>
    <name type="scientific">Geobacillus stearothermophilus</name>
    <name type="common">Bacillus stearothermophilus</name>
    <dbReference type="NCBI Taxonomy" id="1422"/>
    <lineage>
        <taxon>Bacteria</taxon>
        <taxon>Bacillati</taxon>
        <taxon>Bacillota</taxon>
        <taxon>Bacilli</taxon>
        <taxon>Bacillales</taxon>
        <taxon>Anoxybacillaceae</taxon>
        <taxon>Geobacillus</taxon>
    </lineage>
</organism>
<accession>Q9ZFL8</accession>
<accession>Q09LY0</accession>
<dbReference type="EC" id="5.3.1.12"/>
<dbReference type="EMBL" id="DQ868502">
    <property type="protein sequence ID" value="ABI49945.1"/>
    <property type="molecule type" value="Genomic_DNA"/>
</dbReference>
<dbReference type="SMR" id="Q9ZFL8"/>
<dbReference type="UniPathway" id="UPA00246"/>
<dbReference type="GO" id="GO:0008880">
    <property type="term" value="F:glucuronate isomerase activity"/>
    <property type="evidence" value="ECO:0007669"/>
    <property type="project" value="UniProtKB-UniRule"/>
</dbReference>
<dbReference type="GO" id="GO:0019698">
    <property type="term" value="P:D-galacturonate catabolic process"/>
    <property type="evidence" value="ECO:0007669"/>
    <property type="project" value="TreeGrafter"/>
</dbReference>
<dbReference type="GO" id="GO:0042840">
    <property type="term" value="P:D-glucuronate catabolic process"/>
    <property type="evidence" value="ECO:0007669"/>
    <property type="project" value="TreeGrafter"/>
</dbReference>
<dbReference type="Gene3D" id="3.20.20.140">
    <property type="entry name" value="Metal-dependent hydrolases"/>
    <property type="match status" value="1"/>
</dbReference>
<dbReference type="Gene3D" id="1.10.2020.10">
    <property type="entry name" value="uronate isomerase, domain 2, chain A"/>
    <property type="match status" value="1"/>
</dbReference>
<dbReference type="HAMAP" id="MF_00675">
    <property type="entry name" value="UxaC"/>
    <property type="match status" value="1"/>
</dbReference>
<dbReference type="InterPro" id="IPR032466">
    <property type="entry name" value="Metal_Hydrolase"/>
</dbReference>
<dbReference type="InterPro" id="IPR003766">
    <property type="entry name" value="Uronate_isomerase"/>
</dbReference>
<dbReference type="NCBIfam" id="NF002794">
    <property type="entry name" value="PRK02925.1"/>
    <property type="match status" value="1"/>
</dbReference>
<dbReference type="PANTHER" id="PTHR30068">
    <property type="entry name" value="URONATE ISOMERASE"/>
    <property type="match status" value="1"/>
</dbReference>
<dbReference type="PANTHER" id="PTHR30068:SF4">
    <property type="entry name" value="URONATE ISOMERASE"/>
    <property type="match status" value="1"/>
</dbReference>
<dbReference type="Pfam" id="PF02614">
    <property type="entry name" value="UxaC"/>
    <property type="match status" value="1"/>
</dbReference>
<dbReference type="SUPFAM" id="SSF51556">
    <property type="entry name" value="Metallo-dependent hydrolases"/>
    <property type="match status" value="1"/>
</dbReference>
<gene>
    <name type="primary">uxaC</name>
</gene>
<sequence length="473" mass="55070">MQPFIHENFLLQNKHAEVLYHDYAKSLPIIDYHCHLSAKEIAEDRRFHDMTELWLEGDHYKWRAMRALGVEEKYITGNASPEEKFQAWAKTVPYCIGNPLYHWTHLELKRYFQVDALLNERTWREIWNHCNDLLRQEGFSARSFMVKSNVEWIGTTDDPLDDLADHQAIAQDPSFLVKIVPSFRPDAVIEINRPSFLDYVGKLGEALACRFMITISCCKPLENRVRYFHEKGCRMADHGLESMPYSECGWKEANDIFQKRKNGFVLSREEEEKYKTSTLCFLARLYHSLGWVMQLHIGSIRNTNEKMFRRLGPNTGYDSIHDFFLAQPLNAFLNELERRDQLPKTIVYTLNPAYNYVVASTVGNFQSEGVKGKVPIWRSLGGFNDSFKMAFIRHLTDLANVGVFSTFVGMLTDSRSFVSYVRHEYFRRIVCNLIGSWIEKGEVPQDYDFLGKIVQDVCYFNAKQYFQVGVSGG</sequence>
<reference key="1">
    <citation type="journal article" date="1999" name="J. Bacteriol.">
        <title>The glucuronic acid utilization gene cluster from Bacillus stearothermophilus T-6.</title>
        <authorList>
            <person name="Shulami S."/>
            <person name="Gat O."/>
            <person name="Sonenshein A.L."/>
            <person name="Shoham Y."/>
        </authorList>
    </citation>
    <scope>NUCLEOTIDE SEQUENCE [GENOMIC DNA]</scope>
    <source>
        <strain>T-6</strain>
    </source>
</reference>